<name>RBL_CYRRA</name>
<gene>
    <name evidence="1" type="primary">rbcL</name>
</gene>
<geneLocation type="chloroplast"/>
<protein>
    <recommendedName>
        <fullName evidence="1">Ribulose bisphosphate carboxylase large chain</fullName>
        <shortName evidence="1">RuBisCO large subunit</shortName>
        <ecNumber evidence="1">4.1.1.39</ecNumber>
    </recommendedName>
</protein>
<comment type="function">
    <text evidence="1">RuBisCO catalyzes two reactions: the carboxylation of D-ribulose 1,5-bisphosphate, the primary event in carbon dioxide fixation, as well as the oxidative fragmentation of the pentose substrate in the photorespiration process. Both reactions occur simultaneously and in competition at the same active site.</text>
</comment>
<comment type="catalytic activity">
    <reaction evidence="1">
        <text>2 (2R)-3-phosphoglycerate + 2 H(+) = D-ribulose 1,5-bisphosphate + CO2 + H2O</text>
        <dbReference type="Rhea" id="RHEA:23124"/>
        <dbReference type="ChEBI" id="CHEBI:15377"/>
        <dbReference type="ChEBI" id="CHEBI:15378"/>
        <dbReference type="ChEBI" id="CHEBI:16526"/>
        <dbReference type="ChEBI" id="CHEBI:57870"/>
        <dbReference type="ChEBI" id="CHEBI:58272"/>
        <dbReference type="EC" id="4.1.1.39"/>
    </reaction>
</comment>
<comment type="catalytic activity">
    <reaction evidence="1">
        <text>D-ribulose 1,5-bisphosphate + O2 = 2-phosphoglycolate + (2R)-3-phosphoglycerate + 2 H(+)</text>
        <dbReference type="Rhea" id="RHEA:36631"/>
        <dbReference type="ChEBI" id="CHEBI:15378"/>
        <dbReference type="ChEBI" id="CHEBI:15379"/>
        <dbReference type="ChEBI" id="CHEBI:57870"/>
        <dbReference type="ChEBI" id="CHEBI:58033"/>
        <dbReference type="ChEBI" id="CHEBI:58272"/>
    </reaction>
</comment>
<comment type="cofactor">
    <cofactor evidence="1">
        <name>Mg(2+)</name>
        <dbReference type="ChEBI" id="CHEBI:18420"/>
    </cofactor>
    <text evidence="1">Binds 1 Mg(2+) ion per subunit.</text>
</comment>
<comment type="subunit">
    <text evidence="1">Heterohexadecamer of 8 large chains and 8 small chains; disulfide-linked. The disulfide link is formed within the large subunit homodimers.</text>
</comment>
<comment type="subcellular location">
    <subcellularLocation>
        <location>Plastid</location>
        <location>Chloroplast</location>
    </subcellularLocation>
</comment>
<comment type="PTM">
    <text evidence="1">The disulfide bond which can form in the large chain dimeric partners within the hexadecamer appears to be associated with oxidative stress and protein turnover.</text>
</comment>
<comment type="miscellaneous">
    <text evidence="1">The basic functional RuBisCO is composed of a large chain homodimer in a 'head-to-tail' conformation. In form I RuBisCO this homodimer is arranged in a barrel-like tetramer with the small subunits forming a tetrameric 'cap' on each end of the 'barrel'.</text>
</comment>
<comment type="similarity">
    <text evidence="1">Belongs to the RuBisCO large chain family. Type I subfamily.</text>
</comment>
<keyword id="KW-0113">Calvin cycle</keyword>
<keyword id="KW-0120">Carbon dioxide fixation</keyword>
<keyword id="KW-0150">Chloroplast</keyword>
<keyword id="KW-1015">Disulfide bond</keyword>
<keyword id="KW-0456">Lyase</keyword>
<keyword id="KW-0460">Magnesium</keyword>
<keyword id="KW-0479">Metal-binding</keyword>
<keyword id="KW-0488">Methylation</keyword>
<keyword id="KW-0503">Monooxygenase</keyword>
<keyword id="KW-0560">Oxidoreductase</keyword>
<keyword id="KW-0601">Photorespiration</keyword>
<keyword id="KW-0602">Photosynthesis</keyword>
<keyword id="KW-0934">Plastid</keyword>
<organism>
    <name type="scientific">Cyrilla racemiflora</name>
    <name type="common">Swamp titi</name>
    <dbReference type="NCBI Taxonomy" id="4341"/>
    <lineage>
        <taxon>Eukaryota</taxon>
        <taxon>Viridiplantae</taxon>
        <taxon>Streptophyta</taxon>
        <taxon>Embryophyta</taxon>
        <taxon>Tracheophyta</taxon>
        <taxon>Spermatophyta</taxon>
        <taxon>Magnoliopsida</taxon>
        <taxon>eudicotyledons</taxon>
        <taxon>Gunneridae</taxon>
        <taxon>Pentapetalae</taxon>
        <taxon>asterids</taxon>
        <taxon>Ericales</taxon>
        <taxon>Cyrillaceae</taxon>
        <taxon>Cyrilla</taxon>
    </lineage>
</organism>
<proteinExistence type="inferred from homology"/>
<evidence type="ECO:0000255" key="1">
    <source>
        <dbReference type="HAMAP-Rule" id="MF_01338"/>
    </source>
</evidence>
<sequence length="465" mass="51404">VGFKAGVKDYKLTYYTPEYETKHTDILAAFRVTPQPGVPPEEAGAAVAAESSTGTWTTVWTDGLTNLDRYKGRCYHIEPVAGEESQFIAYVAYPLDLFEEGSVTNMLTSIVGNVFGFKALRSLRLEDLRIPVAYAKTFQGPPHGIQVEGDKLNKYGRPLLGCTIKPKLGLSAKNYGRAVYECLRGGLDFTKDDENVNSQPFMRWRDRFVFCAEAIYKAQAETGEIKGHYLNATAGTCEEMMKRAVFARELGVPIIMHDYLTGGFTANTSLAHYCRDNGLLLHIHRAMHAVIDRQKNHGMHFRVLAKALRMSGGDHIHAGTVVGKLEGERDITLGFVDLLRDDYIEKDRSPGIYFSQDWVSLAGVLPVASGGIHVWHMPALTEIFGDDSVLQFGGGTLGHPWGNAPGAVANRVALEACVQARNEGRDLAREGNEIIREASKWSPELAAACEVWKEIKFEFPAMDTL</sequence>
<accession>P28396</accession>
<feature type="chain" id="PRO_0000062435" description="Ribulose bisphosphate carboxylase large chain">
    <location>
        <begin position="1" status="less than"/>
        <end position="465"/>
    </location>
</feature>
<feature type="active site" description="Proton acceptor" evidence="1">
    <location>
        <position position="165"/>
    </location>
</feature>
<feature type="active site" description="Proton acceptor" evidence="1">
    <location>
        <position position="284"/>
    </location>
</feature>
<feature type="binding site" description="in homodimeric partner" evidence="1">
    <location>
        <position position="113"/>
    </location>
    <ligand>
        <name>substrate</name>
    </ligand>
</feature>
<feature type="binding site" evidence="1">
    <location>
        <position position="163"/>
    </location>
    <ligand>
        <name>substrate</name>
    </ligand>
</feature>
<feature type="binding site" evidence="1">
    <location>
        <position position="167"/>
    </location>
    <ligand>
        <name>substrate</name>
    </ligand>
</feature>
<feature type="binding site" description="via carbamate group" evidence="1">
    <location>
        <position position="191"/>
    </location>
    <ligand>
        <name>Mg(2+)</name>
        <dbReference type="ChEBI" id="CHEBI:18420"/>
    </ligand>
</feature>
<feature type="binding site" evidence="1">
    <location>
        <position position="193"/>
    </location>
    <ligand>
        <name>Mg(2+)</name>
        <dbReference type="ChEBI" id="CHEBI:18420"/>
    </ligand>
</feature>
<feature type="binding site" evidence="1">
    <location>
        <position position="194"/>
    </location>
    <ligand>
        <name>Mg(2+)</name>
        <dbReference type="ChEBI" id="CHEBI:18420"/>
    </ligand>
</feature>
<feature type="binding site" evidence="1">
    <location>
        <position position="285"/>
    </location>
    <ligand>
        <name>substrate</name>
    </ligand>
</feature>
<feature type="binding site" evidence="1">
    <location>
        <position position="317"/>
    </location>
    <ligand>
        <name>substrate</name>
    </ligand>
</feature>
<feature type="binding site" evidence="1">
    <location>
        <position position="369"/>
    </location>
    <ligand>
        <name>substrate</name>
    </ligand>
</feature>
<feature type="site" description="Transition state stabilizer" evidence="1">
    <location>
        <position position="324"/>
    </location>
</feature>
<feature type="modified residue" description="N6,N6,N6-trimethyllysine" evidence="1">
    <location>
        <position position="4"/>
    </location>
</feature>
<feature type="modified residue" description="N6-carboxylysine" evidence="1">
    <location>
        <position position="191"/>
    </location>
</feature>
<feature type="disulfide bond" description="Interchain; in linked form" evidence="1">
    <location>
        <position position="237"/>
    </location>
</feature>
<feature type="non-terminal residue">
    <location>
        <position position="1"/>
    </location>
</feature>
<reference key="1">
    <citation type="journal article" date="1992" name="Science">
        <title>Carnivorous plants: phylogeny and structural evolution.</title>
        <authorList>
            <person name="Albert V.A."/>
            <person name="Williams S.E."/>
            <person name="Chase M.W."/>
        </authorList>
    </citation>
    <scope>NUCLEOTIDE SEQUENCE [GENOMIC DNA]</scope>
</reference>
<dbReference type="EC" id="4.1.1.39" evidence="1"/>
<dbReference type="EMBL" id="L01900">
    <property type="protein sequence ID" value="AAA84194.2"/>
    <property type="molecule type" value="Genomic_DNA"/>
</dbReference>
<dbReference type="SMR" id="P28396"/>
<dbReference type="GO" id="GO:0009507">
    <property type="term" value="C:chloroplast"/>
    <property type="evidence" value="ECO:0007669"/>
    <property type="project" value="UniProtKB-SubCell"/>
</dbReference>
<dbReference type="GO" id="GO:0000287">
    <property type="term" value="F:magnesium ion binding"/>
    <property type="evidence" value="ECO:0007669"/>
    <property type="project" value="InterPro"/>
</dbReference>
<dbReference type="GO" id="GO:0004497">
    <property type="term" value="F:monooxygenase activity"/>
    <property type="evidence" value="ECO:0007669"/>
    <property type="project" value="UniProtKB-KW"/>
</dbReference>
<dbReference type="GO" id="GO:0016984">
    <property type="term" value="F:ribulose-bisphosphate carboxylase activity"/>
    <property type="evidence" value="ECO:0007669"/>
    <property type="project" value="UniProtKB-EC"/>
</dbReference>
<dbReference type="GO" id="GO:0009853">
    <property type="term" value="P:photorespiration"/>
    <property type="evidence" value="ECO:0007669"/>
    <property type="project" value="UniProtKB-KW"/>
</dbReference>
<dbReference type="GO" id="GO:0019253">
    <property type="term" value="P:reductive pentose-phosphate cycle"/>
    <property type="evidence" value="ECO:0007669"/>
    <property type="project" value="UniProtKB-KW"/>
</dbReference>
<dbReference type="CDD" id="cd08212">
    <property type="entry name" value="RuBisCO_large_I"/>
    <property type="match status" value="1"/>
</dbReference>
<dbReference type="FunFam" id="3.20.20.110:FF:000001">
    <property type="entry name" value="Ribulose bisphosphate carboxylase large chain"/>
    <property type="match status" value="1"/>
</dbReference>
<dbReference type="FunFam" id="3.30.70.150:FF:000001">
    <property type="entry name" value="Ribulose bisphosphate carboxylase large chain"/>
    <property type="match status" value="1"/>
</dbReference>
<dbReference type="Gene3D" id="3.20.20.110">
    <property type="entry name" value="Ribulose bisphosphate carboxylase, large subunit, C-terminal domain"/>
    <property type="match status" value="1"/>
</dbReference>
<dbReference type="Gene3D" id="3.30.70.150">
    <property type="entry name" value="RuBisCO large subunit, N-terminal domain"/>
    <property type="match status" value="1"/>
</dbReference>
<dbReference type="HAMAP" id="MF_01338">
    <property type="entry name" value="RuBisCO_L_type1"/>
    <property type="match status" value="1"/>
</dbReference>
<dbReference type="InterPro" id="IPR033966">
    <property type="entry name" value="RuBisCO"/>
</dbReference>
<dbReference type="InterPro" id="IPR020878">
    <property type="entry name" value="RuBisCo_large_chain_AS"/>
</dbReference>
<dbReference type="InterPro" id="IPR000685">
    <property type="entry name" value="RuBisCO_lsu_C"/>
</dbReference>
<dbReference type="InterPro" id="IPR036376">
    <property type="entry name" value="RuBisCO_lsu_C_sf"/>
</dbReference>
<dbReference type="InterPro" id="IPR017443">
    <property type="entry name" value="RuBisCO_lsu_fd_N"/>
</dbReference>
<dbReference type="InterPro" id="IPR036422">
    <property type="entry name" value="RuBisCO_lsu_N_sf"/>
</dbReference>
<dbReference type="InterPro" id="IPR020888">
    <property type="entry name" value="RuBisCO_lsuI"/>
</dbReference>
<dbReference type="NCBIfam" id="NF003252">
    <property type="entry name" value="PRK04208.1"/>
    <property type="match status" value="1"/>
</dbReference>
<dbReference type="PANTHER" id="PTHR42704">
    <property type="entry name" value="RIBULOSE BISPHOSPHATE CARBOXYLASE"/>
    <property type="match status" value="1"/>
</dbReference>
<dbReference type="PANTHER" id="PTHR42704:SF15">
    <property type="entry name" value="RIBULOSE BISPHOSPHATE CARBOXYLASE LARGE CHAIN"/>
    <property type="match status" value="1"/>
</dbReference>
<dbReference type="Pfam" id="PF00016">
    <property type="entry name" value="RuBisCO_large"/>
    <property type="match status" value="1"/>
</dbReference>
<dbReference type="Pfam" id="PF02788">
    <property type="entry name" value="RuBisCO_large_N"/>
    <property type="match status" value="1"/>
</dbReference>
<dbReference type="SFLD" id="SFLDG01052">
    <property type="entry name" value="RuBisCO"/>
    <property type="match status" value="1"/>
</dbReference>
<dbReference type="SFLD" id="SFLDS00014">
    <property type="entry name" value="RuBisCO"/>
    <property type="match status" value="1"/>
</dbReference>
<dbReference type="SFLD" id="SFLDG00301">
    <property type="entry name" value="RuBisCO-like_proteins"/>
    <property type="match status" value="1"/>
</dbReference>
<dbReference type="SUPFAM" id="SSF51649">
    <property type="entry name" value="RuBisCo, C-terminal domain"/>
    <property type="match status" value="1"/>
</dbReference>
<dbReference type="SUPFAM" id="SSF54966">
    <property type="entry name" value="RuBisCO, large subunit, small (N-terminal) domain"/>
    <property type="match status" value="1"/>
</dbReference>
<dbReference type="PROSITE" id="PS00157">
    <property type="entry name" value="RUBISCO_LARGE"/>
    <property type="match status" value="1"/>
</dbReference>